<name>DLDH_CHLP8</name>
<feature type="chain" id="PRO_0000068023" description="Dihydrolipoyl dehydrogenase">
    <location>
        <begin position="1"/>
        <end position="469"/>
    </location>
</feature>
<feature type="active site" description="Proton acceptor" evidence="1">
    <location>
        <position position="450"/>
    </location>
</feature>
<feature type="binding site" evidence="1">
    <location>
        <begin position="40"/>
        <end position="48"/>
    </location>
    <ligand>
        <name>FAD</name>
        <dbReference type="ChEBI" id="CHEBI:57692"/>
    </ligand>
</feature>
<feature type="binding site" evidence="1">
    <location>
        <position position="57"/>
    </location>
    <ligand>
        <name>FAD</name>
        <dbReference type="ChEBI" id="CHEBI:57692"/>
    </ligand>
</feature>
<feature type="binding site" evidence="1">
    <location>
        <position position="120"/>
    </location>
    <ligand>
        <name>FAD</name>
        <dbReference type="ChEBI" id="CHEBI:57692"/>
    </ligand>
</feature>
<feature type="binding site" evidence="1">
    <location>
        <begin position="186"/>
        <end position="190"/>
    </location>
    <ligand>
        <name>NAD(+)</name>
        <dbReference type="ChEBI" id="CHEBI:57540"/>
    </ligand>
</feature>
<feature type="binding site" evidence="1">
    <location>
        <position position="209"/>
    </location>
    <ligand>
        <name>NAD(+)</name>
        <dbReference type="ChEBI" id="CHEBI:57540"/>
    </ligand>
</feature>
<feature type="binding site" evidence="1">
    <location>
        <begin position="275"/>
        <end position="278"/>
    </location>
    <ligand>
        <name>NAD(+)</name>
        <dbReference type="ChEBI" id="CHEBI:57540"/>
    </ligand>
</feature>
<feature type="binding site" evidence="1">
    <location>
        <position position="317"/>
    </location>
    <ligand>
        <name>FAD</name>
        <dbReference type="ChEBI" id="CHEBI:57692"/>
    </ligand>
</feature>
<feature type="binding site" evidence="1">
    <location>
        <position position="325"/>
    </location>
    <ligand>
        <name>FAD</name>
        <dbReference type="ChEBI" id="CHEBI:57692"/>
    </ligand>
</feature>
<feature type="disulfide bond" description="Redox-active" evidence="1">
    <location>
        <begin position="48"/>
        <end position="53"/>
    </location>
</feature>
<feature type="sequence conflict" description="In Ref. 1; CAB06298." evidence="2" ref="1">
    <original>A</original>
    <variation>R</variation>
    <location>
        <position position="42"/>
    </location>
</feature>
<feature type="sequence conflict" description="In Ref. 1; CAB06298." evidence="2" ref="1">
    <original>A</original>
    <variation>S</variation>
    <location>
        <position position="463"/>
    </location>
</feature>
<feature type="sequence conflict" description="In Ref. 1; CAB06298." evidence="2" ref="1">
    <original>QS</original>
    <variation>PN</variation>
    <location>
        <begin position="466"/>
        <end position="467"/>
    </location>
</feature>
<accession>O50311</accession>
<accession>B3QMJ0</accession>
<evidence type="ECO:0000250" key="1"/>
<evidence type="ECO:0000305" key="2"/>
<protein>
    <recommendedName>
        <fullName>Dihydrolipoyl dehydrogenase</fullName>
        <ecNumber>1.8.1.4</ecNumber>
    </recommendedName>
    <alternativeName>
        <fullName>Dihydrolipoamide dehydrogenase</fullName>
    </alternativeName>
    <alternativeName>
        <fullName>E3 component of pyruvate and 2-oxoglutarate dehydrogenases complexes</fullName>
    </alternativeName>
</protein>
<dbReference type="EC" id="1.8.1.4"/>
<dbReference type="EMBL" id="Z83933">
    <property type="protein sequence ID" value="CAB06298.1"/>
    <property type="molecule type" value="Genomic_DNA"/>
</dbReference>
<dbReference type="EMBL" id="CP001099">
    <property type="protein sequence ID" value="ACF11143.1"/>
    <property type="molecule type" value="Genomic_DNA"/>
</dbReference>
<dbReference type="PIR" id="T17191">
    <property type="entry name" value="T17191"/>
</dbReference>
<dbReference type="RefSeq" id="WP_012501976.1">
    <property type="nucleotide sequence ID" value="NC_011027.1"/>
</dbReference>
<dbReference type="SMR" id="O50311"/>
<dbReference type="STRING" id="517417.Cpar_0724"/>
<dbReference type="KEGG" id="cpc:Cpar_0724"/>
<dbReference type="eggNOG" id="COG1249">
    <property type="taxonomic scope" value="Bacteria"/>
</dbReference>
<dbReference type="HOGENOM" id="CLU_016755_0_3_10"/>
<dbReference type="OrthoDB" id="9800167at2"/>
<dbReference type="Proteomes" id="UP000008811">
    <property type="component" value="Chromosome"/>
</dbReference>
<dbReference type="GO" id="GO:0005737">
    <property type="term" value="C:cytoplasm"/>
    <property type="evidence" value="ECO:0007669"/>
    <property type="project" value="UniProtKB-SubCell"/>
</dbReference>
<dbReference type="GO" id="GO:0004148">
    <property type="term" value="F:dihydrolipoyl dehydrogenase (NADH) activity"/>
    <property type="evidence" value="ECO:0007669"/>
    <property type="project" value="UniProtKB-EC"/>
</dbReference>
<dbReference type="GO" id="GO:0050660">
    <property type="term" value="F:flavin adenine dinucleotide binding"/>
    <property type="evidence" value="ECO:0007669"/>
    <property type="project" value="InterPro"/>
</dbReference>
<dbReference type="GO" id="GO:0006103">
    <property type="term" value="P:2-oxoglutarate metabolic process"/>
    <property type="evidence" value="ECO:0007669"/>
    <property type="project" value="TreeGrafter"/>
</dbReference>
<dbReference type="FunFam" id="3.30.390.30:FF:000001">
    <property type="entry name" value="Dihydrolipoyl dehydrogenase"/>
    <property type="match status" value="1"/>
</dbReference>
<dbReference type="Gene3D" id="3.30.390.30">
    <property type="match status" value="1"/>
</dbReference>
<dbReference type="Gene3D" id="3.50.50.60">
    <property type="entry name" value="FAD/NAD(P)-binding domain"/>
    <property type="match status" value="2"/>
</dbReference>
<dbReference type="InterPro" id="IPR050151">
    <property type="entry name" value="Class-I_Pyr_Nuc-Dis_Oxidored"/>
</dbReference>
<dbReference type="InterPro" id="IPR036188">
    <property type="entry name" value="FAD/NAD-bd_sf"/>
</dbReference>
<dbReference type="InterPro" id="IPR023753">
    <property type="entry name" value="FAD/NAD-binding_dom"/>
</dbReference>
<dbReference type="InterPro" id="IPR016156">
    <property type="entry name" value="FAD/NAD-linked_Rdtase_dimer_sf"/>
</dbReference>
<dbReference type="InterPro" id="IPR006258">
    <property type="entry name" value="Lipoamide_DH"/>
</dbReference>
<dbReference type="InterPro" id="IPR001100">
    <property type="entry name" value="Pyr_nuc-diS_OxRdtase"/>
</dbReference>
<dbReference type="InterPro" id="IPR004099">
    <property type="entry name" value="Pyr_nucl-diS_OxRdtase_dimer"/>
</dbReference>
<dbReference type="InterPro" id="IPR012999">
    <property type="entry name" value="Pyr_OxRdtase_I_AS"/>
</dbReference>
<dbReference type="NCBIfam" id="TIGR01350">
    <property type="entry name" value="lipoamide_DH"/>
    <property type="match status" value="1"/>
</dbReference>
<dbReference type="PANTHER" id="PTHR22912:SF217">
    <property type="entry name" value="DIHYDROLIPOYL DEHYDROGENASE"/>
    <property type="match status" value="1"/>
</dbReference>
<dbReference type="PANTHER" id="PTHR22912">
    <property type="entry name" value="DISULFIDE OXIDOREDUCTASE"/>
    <property type="match status" value="1"/>
</dbReference>
<dbReference type="Pfam" id="PF07992">
    <property type="entry name" value="Pyr_redox_2"/>
    <property type="match status" value="1"/>
</dbReference>
<dbReference type="Pfam" id="PF02852">
    <property type="entry name" value="Pyr_redox_dim"/>
    <property type="match status" value="1"/>
</dbReference>
<dbReference type="PIRSF" id="PIRSF000350">
    <property type="entry name" value="Mercury_reductase_MerA"/>
    <property type="match status" value="1"/>
</dbReference>
<dbReference type="PRINTS" id="PR00368">
    <property type="entry name" value="FADPNR"/>
</dbReference>
<dbReference type="PRINTS" id="PR00411">
    <property type="entry name" value="PNDRDTASEI"/>
</dbReference>
<dbReference type="SUPFAM" id="SSF51905">
    <property type="entry name" value="FAD/NAD(P)-binding domain"/>
    <property type="match status" value="1"/>
</dbReference>
<dbReference type="SUPFAM" id="SSF55424">
    <property type="entry name" value="FAD/NAD-linked reductases, dimerisation (C-terminal) domain"/>
    <property type="match status" value="1"/>
</dbReference>
<dbReference type="PROSITE" id="PS00076">
    <property type="entry name" value="PYRIDINE_REDOX_1"/>
    <property type="match status" value="1"/>
</dbReference>
<keyword id="KW-0963">Cytoplasm</keyword>
<keyword id="KW-1015">Disulfide bond</keyword>
<keyword id="KW-0274">FAD</keyword>
<keyword id="KW-0285">Flavoprotein</keyword>
<keyword id="KW-0520">NAD</keyword>
<keyword id="KW-0560">Oxidoreductase</keyword>
<keyword id="KW-0676">Redox-active center</keyword>
<comment type="function">
    <text evidence="1">Lipoamide dehydrogenase is a component of the alpha-ketoacid dehydrogenase complexes.</text>
</comment>
<comment type="catalytic activity">
    <reaction>
        <text>N(6)-[(R)-dihydrolipoyl]-L-lysyl-[protein] + NAD(+) = N(6)-[(R)-lipoyl]-L-lysyl-[protein] + NADH + H(+)</text>
        <dbReference type="Rhea" id="RHEA:15045"/>
        <dbReference type="Rhea" id="RHEA-COMP:10474"/>
        <dbReference type="Rhea" id="RHEA-COMP:10475"/>
        <dbReference type="ChEBI" id="CHEBI:15378"/>
        <dbReference type="ChEBI" id="CHEBI:57540"/>
        <dbReference type="ChEBI" id="CHEBI:57945"/>
        <dbReference type="ChEBI" id="CHEBI:83099"/>
        <dbReference type="ChEBI" id="CHEBI:83100"/>
        <dbReference type="EC" id="1.8.1.4"/>
    </reaction>
</comment>
<comment type="cofactor">
    <cofactor evidence="1">
        <name>FAD</name>
        <dbReference type="ChEBI" id="CHEBI:57692"/>
    </cofactor>
    <text evidence="1">Binds 1 FAD per subunit.</text>
</comment>
<comment type="subunit">
    <text evidence="1">Homodimer.</text>
</comment>
<comment type="subcellular location">
    <subcellularLocation>
        <location evidence="2">Cytoplasm</location>
    </subcellularLocation>
</comment>
<comment type="miscellaneous">
    <text>The active site is a redox-active disulfide bond.</text>
</comment>
<comment type="similarity">
    <text evidence="2">Belongs to the class-I pyridine nucleotide-disulfide oxidoreductase family.</text>
</comment>
<sequence length="469" mass="48755">MQQSESSSAQFDVAVIGSGPGGYEAALHAARHGMKVCLVEKASLGGVCVNWGCIPTKALLRSAEVYDLAKNPSEFGVNVSELSFDLAQAVKRSRKVSLKSSKGVEFMLKKAKVEVWRGEAVLTGSKGVKVTAEDGSERSLEAANIIVATGAQPRVIPGLEPDGKKIITSREALILKDVPESMIVVGGGAIGVEMAWFYAKAGAKVTIVELMPRLLPAEEAEVSEALKRSFEKVDITVQCGAKLGNVAISEFGVNADLLAEGKEPQKIEASCMLVAVGVTGVIDGLGLDAAGIETERGFIRTDELCRTSASGIYAIGDVRGGMLLAHKASAEAAIAVEAIAGKLPEPLSEPLIPRCVYAQPSVASVGLTEEAAIAAGYKVLVGRSQFAASGKANAYGQLEGFVKLVFNAETGKMLGGHLIGHDAVELIGELGLACRYGVTAEGLVGTVHAHPTLSETVREAAFAALQSKG</sequence>
<proteinExistence type="inferred from homology"/>
<reference key="1">
    <citation type="journal article" date="1996" name="Hereditas">
        <title>Clustering of genes with function in the biosynthesis of bacteriochlorophyll and heme in the green sulfur bacterium Chlorobium vibrioforme.</title>
        <authorList>
            <person name="Petersen B.L."/>
            <person name="Moeller M.G."/>
            <person name="Stummann B.M."/>
            <person name="Henningsen K.W."/>
        </authorList>
    </citation>
    <scope>NUCLEOTIDE SEQUENCE [GENOMIC DNA]</scope>
</reference>
<reference key="2">
    <citation type="submission" date="2008-06" db="EMBL/GenBank/DDBJ databases">
        <title>Complete sequence of Chlorobaculum parvum NCIB 8327.</title>
        <authorList>
            <consortium name="US DOE Joint Genome Institute"/>
            <person name="Lucas S."/>
            <person name="Copeland A."/>
            <person name="Lapidus A."/>
            <person name="Glavina del Rio T."/>
            <person name="Dalin E."/>
            <person name="Tice H."/>
            <person name="Bruce D."/>
            <person name="Goodwin L."/>
            <person name="Pitluck S."/>
            <person name="Schmutz J."/>
            <person name="Larimer F."/>
            <person name="Land M."/>
            <person name="Hauser L."/>
            <person name="Kyrpides N."/>
            <person name="Mikhailova N."/>
            <person name="Zhao F."/>
            <person name="Li T."/>
            <person name="Liu Z."/>
            <person name="Overmann J."/>
            <person name="Bryant D.A."/>
            <person name="Richardson P."/>
        </authorList>
    </citation>
    <scope>NUCLEOTIDE SEQUENCE [LARGE SCALE GENOMIC DNA]</scope>
    <source>
        <strain>DSM 263 / NCIMB 8327</strain>
    </source>
</reference>
<gene>
    <name type="primary">lpd</name>
    <name type="ordered locus">Cpar_0724</name>
</gene>
<organism>
    <name type="scientific">Chlorobaculum parvum (strain DSM 263 / NCIMB 8327)</name>
    <name type="common">Chlorobium vibrioforme subsp. thiosulfatophilum</name>
    <dbReference type="NCBI Taxonomy" id="517417"/>
    <lineage>
        <taxon>Bacteria</taxon>
        <taxon>Pseudomonadati</taxon>
        <taxon>Chlorobiota</taxon>
        <taxon>Chlorobiia</taxon>
        <taxon>Chlorobiales</taxon>
        <taxon>Chlorobiaceae</taxon>
        <taxon>Chlorobaculum</taxon>
    </lineage>
</organism>